<gene>
    <name type="primary">parB</name>
    <name type="ordered locus">HP_1138</name>
</gene>
<organism>
    <name type="scientific">Helicobacter pylori (strain ATCC 700392 / 26695)</name>
    <name type="common">Campylobacter pylori</name>
    <dbReference type="NCBI Taxonomy" id="85962"/>
    <lineage>
        <taxon>Bacteria</taxon>
        <taxon>Pseudomonadati</taxon>
        <taxon>Campylobacterota</taxon>
        <taxon>Epsilonproteobacteria</taxon>
        <taxon>Campylobacterales</taxon>
        <taxon>Helicobacteraceae</taxon>
        <taxon>Helicobacter</taxon>
    </lineage>
</organism>
<reference key="1">
    <citation type="journal article" date="1997" name="Nature">
        <title>The complete genome sequence of the gastric pathogen Helicobacter pylori.</title>
        <authorList>
            <person name="Tomb J.-F."/>
            <person name="White O."/>
            <person name="Kerlavage A.R."/>
            <person name="Clayton R.A."/>
            <person name="Sutton G.G."/>
            <person name="Fleischmann R.D."/>
            <person name="Ketchum K.A."/>
            <person name="Klenk H.-P."/>
            <person name="Gill S.R."/>
            <person name="Dougherty B.A."/>
            <person name="Nelson K.E."/>
            <person name="Quackenbush J."/>
            <person name="Zhou L."/>
            <person name="Kirkness E.F."/>
            <person name="Peterson S.N."/>
            <person name="Loftus B.J."/>
            <person name="Richardson D.L."/>
            <person name="Dodson R.J."/>
            <person name="Khalak H.G."/>
            <person name="Glodek A."/>
            <person name="McKenney K."/>
            <person name="FitzGerald L.M."/>
            <person name="Lee N."/>
            <person name="Adams M.D."/>
            <person name="Hickey E.K."/>
            <person name="Berg D.E."/>
            <person name="Gocayne J.D."/>
            <person name="Utterback T.R."/>
            <person name="Peterson J.D."/>
            <person name="Kelley J.M."/>
            <person name="Cotton M.D."/>
            <person name="Weidman J.F."/>
            <person name="Fujii C."/>
            <person name="Bowman C."/>
            <person name="Watthey L."/>
            <person name="Wallin E."/>
            <person name="Hayes W.S."/>
            <person name="Borodovsky M."/>
            <person name="Karp P.D."/>
            <person name="Smith H.O."/>
            <person name="Fraser C.M."/>
            <person name="Venter J.C."/>
        </authorList>
    </citation>
    <scope>NUCLEOTIDE SEQUENCE [LARGE SCALE GENOMIC DNA]</scope>
    <source>
        <strain>ATCC 700392 / 26695</strain>
    </source>
</reference>
<sequence length="290" mass="33166">MAKNKVLGRGLADIFPEINEVYEQGLYERANRVVELGIDEVMPNPYQPRKVFSEDSLEELAQSIKEHGLLQPVLVVSENGRYHLIAGERRLRASKLAKMPTIKAIVVDIEQEKMREVALIENIQREDLNPLELARSYKELLESYQMTQEELSKIVKKSRAHVANIMRLLTLSSKVQNALLEEKITSGHAKVLVGLDGEKQELILNSIIGQKLSVRQTEDLARDFKINANFDNKKHGFKQTQTLIAGDELERLNQSLWDHYKLKAALKGNKIVLRCYENSLLEAFMKKMMS</sequence>
<accession>O25758</accession>
<evidence type="ECO:0000250" key="1"/>
<evidence type="ECO:0000305" key="2"/>
<evidence type="ECO:0007829" key="3">
    <source>
        <dbReference type="PDB" id="4UMK"/>
    </source>
</evidence>
<proteinExistence type="evidence at protein level"/>
<keyword id="KW-0002">3D-structure</keyword>
<keyword id="KW-0159">Chromosome partition</keyword>
<keyword id="KW-0238">DNA-binding</keyword>
<keyword id="KW-1185">Reference proteome</keyword>
<dbReference type="EMBL" id="AE000511">
    <property type="protein sequence ID" value="AAD08184.1"/>
    <property type="molecule type" value="Genomic_DNA"/>
</dbReference>
<dbReference type="PIR" id="B64662">
    <property type="entry name" value="B64662"/>
</dbReference>
<dbReference type="RefSeq" id="NP_207929.1">
    <property type="nucleotide sequence ID" value="NC_000915.1"/>
</dbReference>
<dbReference type="RefSeq" id="WP_001107421.1">
    <property type="nucleotide sequence ID" value="NC_018939.1"/>
</dbReference>
<dbReference type="PDB" id="4UMK">
    <property type="method" value="X-ray"/>
    <property type="resolution" value="3.10 A"/>
    <property type="chains" value="A/B/C/D=1-240"/>
</dbReference>
<dbReference type="PDB" id="8JMJ">
    <property type="method" value="X-ray"/>
    <property type="resolution" value="2.57 A"/>
    <property type="chains" value="K/L/M/N=1-10"/>
</dbReference>
<dbReference type="PDBsum" id="4UMK"/>
<dbReference type="PDBsum" id="8JMJ"/>
<dbReference type="SMR" id="O25758"/>
<dbReference type="DIP" id="DIP-3152N"/>
<dbReference type="IntAct" id="O25758">
    <property type="interactions" value="4"/>
</dbReference>
<dbReference type="MINT" id="O25758"/>
<dbReference type="STRING" id="85962.HP_1138"/>
<dbReference type="PaxDb" id="85962-C694_05870"/>
<dbReference type="EnsemblBacteria" id="AAD08184">
    <property type="protein sequence ID" value="AAD08184"/>
    <property type="gene ID" value="HP_1138"/>
</dbReference>
<dbReference type="KEGG" id="heo:C694_05870"/>
<dbReference type="KEGG" id="hpy:HP_1138"/>
<dbReference type="PATRIC" id="fig|85962.47.peg.1220"/>
<dbReference type="eggNOG" id="COG1475">
    <property type="taxonomic scope" value="Bacteria"/>
</dbReference>
<dbReference type="InParanoid" id="O25758"/>
<dbReference type="OrthoDB" id="9802051at2"/>
<dbReference type="PhylomeDB" id="O25758"/>
<dbReference type="EvolutionaryTrace" id="O25758"/>
<dbReference type="Proteomes" id="UP000000429">
    <property type="component" value="Chromosome"/>
</dbReference>
<dbReference type="GO" id="GO:0005694">
    <property type="term" value="C:chromosome"/>
    <property type="evidence" value="ECO:0000318"/>
    <property type="project" value="GO_Central"/>
</dbReference>
<dbReference type="GO" id="GO:0003677">
    <property type="term" value="F:DNA binding"/>
    <property type="evidence" value="ECO:0007669"/>
    <property type="project" value="UniProtKB-KW"/>
</dbReference>
<dbReference type="GO" id="GO:0007059">
    <property type="term" value="P:chromosome segregation"/>
    <property type="evidence" value="ECO:0000318"/>
    <property type="project" value="GO_Central"/>
</dbReference>
<dbReference type="GO" id="GO:0045881">
    <property type="term" value="P:positive regulation of sporulation resulting in formation of a cellular spore"/>
    <property type="evidence" value="ECO:0000318"/>
    <property type="project" value="GO_Central"/>
</dbReference>
<dbReference type="CDD" id="cd16393">
    <property type="entry name" value="SPO0J_N"/>
    <property type="match status" value="1"/>
</dbReference>
<dbReference type="FunFam" id="1.10.10.2830:FF:000001">
    <property type="entry name" value="Chromosome partitioning protein ParB"/>
    <property type="match status" value="1"/>
</dbReference>
<dbReference type="FunFam" id="3.90.1530.30:FF:000001">
    <property type="entry name" value="Chromosome partitioning protein ParB"/>
    <property type="match status" value="1"/>
</dbReference>
<dbReference type="Gene3D" id="1.10.10.2830">
    <property type="match status" value="1"/>
</dbReference>
<dbReference type="Gene3D" id="3.90.1530.30">
    <property type="match status" value="1"/>
</dbReference>
<dbReference type="InterPro" id="IPR050336">
    <property type="entry name" value="Chromosome_partition/occlusion"/>
</dbReference>
<dbReference type="InterPro" id="IPR041468">
    <property type="entry name" value="HTH_ParB/Spo0J"/>
</dbReference>
<dbReference type="InterPro" id="IPR004437">
    <property type="entry name" value="ParB/RepB/Spo0J"/>
</dbReference>
<dbReference type="InterPro" id="IPR003115">
    <property type="entry name" value="ParB/Sulfiredoxin_dom"/>
</dbReference>
<dbReference type="InterPro" id="IPR036086">
    <property type="entry name" value="ParB/Sulfiredoxin_sf"/>
</dbReference>
<dbReference type="NCBIfam" id="TIGR00180">
    <property type="entry name" value="parB_part"/>
    <property type="match status" value="1"/>
</dbReference>
<dbReference type="PANTHER" id="PTHR33375">
    <property type="entry name" value="CHROMOSOME-PARTITIONING PROTEIN PARB-RELATED"/>
    <property type="match status" value="1"/>
</dbReference>
<dbReference type="PANTHER" id="PTHR33375:SF1">
    <property type="entry name" value="CHROMOSOME-PARTITIONING PROTEIN PARB-RELATED"/>
    <property type="match status" value="1"/>
</dbReference>
<dbReference type="Pfam" id="PF17762">
    <property type="entry name" value="HTH_ParB"/>
    <property type="match status" value="1"/>
</dbReference>
<dbReference type="Pfam" id="PF02195">
    <property type="entry name" value="ParBc"/>
    <property type="match status" value="1"/>
</dbReference>
<dbReference type="SMART" id="SM00470">
    <property type="entry name" value="ParB"/>
    <property type="match status" value="1"/>
</dbReference>
<dbReference type="SUPFAM" id="SSF109709">
    <property type="entry name" value="KorB DNA-binding domain-like"/>
    <property type="match status" value="1"/>
</dbReference>
<dbReference type="SUPFAM" id="SSF110849">
    <property type="entry name" value="ParB/Sulfiredoxin"/>
    <property type="match status" value="1"/>
</dbReference>
<feature type="chain" id="PRO_0000178682" description="Probable chromosome-partitioning protein ParB">
    <location>
        <begin position="1"/>
        <end position="290"/>
    </location>
</feature>
<feature type="helix" evidence="3">
    <location>
        <begin position="37"/>
        <end position="40"/>
    </location>
</feature>
<feature type="helix" evidence="3">
    <location>
        <begin position="56"/>
        <end position="64"/>
    </location>
</feature>
<feature type="strand" evidence="3">
    <location>
        <begin position="68"/>
        <end position="71"/>
    </location>
</feature>
<feature type="strand" evidence="3">
    <location>
        <begin position="74"/>
        <end position="77"/>
    </location>
</feature>
<feature type="strand" evidence="3">
    <location>
        <begin position="82"/>
        <end position="86"/>
    </location>
</feature>
<feature type="helix" evidence="3">
    <location>
        <begin position="88"/>
        <end position="96"/>
    </location>
</feature>
<feature type="strand" evidence="3">
    <location>
        <begin position="107"/>
        <end position="110"/>
    </location>
</feature>
<feature type="helix" evidence="3">
    <location>
        <begin position="111"/>
        <end position="122"/>
    </location>
</feature>
<feature type="helix" evidence="3">
    <location>
        <begin position="130"/>
        <end position="142"/>
    </location>
</feature>
<feature type="helix" evidence="3">
    <location>
        <begin position="148"/>
        <end position="155"/>
    </location>
</feature>
<feature type="helix" evidence="3">
    <location>
        <begin position="159"/>
        <end position="167"/>
    </location>
</feature>
<feature type="helix" evidence="3">
    <location>
        <begin position="168"/>
        <end position="170"/>
    </location>
</feature>
<feature type="helix" evidence="3">
    <location>
        <begin position="173"/>
        <end position="180"/>
    </location>
</feature>
<feature type="helix" evidence="3">
    <location>
        <begin position="186"/>
        <end position="189"/>
    </location>
</feature>
<feature type="helix" evidence="3">
    <location>
        <begin position="190"/>
        <end position="192"/>
    </location>
</feature>
<feature type="helix" evidence="3">
    <location>
        <begin position="197"/>
        <end position="210"/>
    </location>
</feature>
<feature type="helix" evidence="3">
    <location>
        <begin position="214"/>
        <end position="222"/>
    </location>
</feature>
<comment type="function">
    <text evidence="1">Involved in chromosome partition. Localize to both poles of the predivisional cell following completion of DNA replication. Binds to the DNA origin of replication (By similarity).</text>
</comment>
<comment type="similarity">
    <text evidence="2">Belongs to the ParB family.</text>
</comment>
<protein>
    <recommendedName>
        <fullName>Probable chromosome-partitioning protein ParB</fullName>
    </recommendedName>
</protein>
<name>PARB_HELPY</name>